<comment type="function">
    <text evidence="1">Catalyzes the conversion of glucosamine-6-phosphate to glucosamine-1-phosphate.</text>
</comment>
<comment type="catalytic activity">
    <reaction evidence="1">
        <text>alpha-D-glucosamine 1-phosphate = D-glucosamine 6-phosphate</text>
        <dbReference type="Rhea" id="RHEA:23424"/>
        <dbReference type="ChEBI" id="CHEBI:58516"/>
        <dbReference type="ChEBI" id="CHEBI:58725"/>
        <dbReference type="EC" id="5.4.2.10"/>
    </reaction>
</comment>
<comment type="cofactor">
    <cofactor evidence="1">
        <name>Mg(2+)</name>
        <dbReference type="ChEBI" id="CHEBI:18420"/>
    </cofactor>
    <text evidence="1">Binds 1 Mg(2+) ion per subunit.</text>
</comment>
<comment type="PTM">
    <text evidence="1">Activated by phosphorylation.</text>
</comment>
<comment type="similarity">
    <text evidence="1">Belongs to the phosphohexose mutase family.</text>
</comment>
<sequence>MSNRKYFGTDGIRGRVGDAPITPEFVLKLGWAAGKVLARHGSRKIIIGKDTRISGYMLESALEAGLAAAGLSASFTGPMPTPAIAYLTRAFRAEAGIVISASHNPFYDNGIKFFSIEGTKLPDDVEEAIEAEMEKELTCVDSAELGKASRIVDAAGRYIEFCKGTFPNELSLGTLKVVVDCAHGATYHIAPNVFRELGAQVIAMGCEPDGLNINEEVGATDVRALQARVLAEKADLGIAYDGDGDRVIMVDHEGNKVDGDQILYIIAREGLRQGQLRGGAVGTLMSNMGLELALKQLGIPFARAKVGDRYVLEMLQEKGWRIGAENSGHVILLDKTTTGDGIVASLQVVAAMVRNHMSLHDLCSGMKMFPQLLVNVRFTEGSGNPLENEHVKAVTAEVEAALGKRGRVLLRKSGTEPLIRVMVEGEHEDQVHEFAHRIAEAVKSV</sequence>
<name>GLMM_KLEP3</name>
<keyword id="KW-0413">Isomerase</keyword>
<keyword id="KW-0460">Magnesium</keyword>
<keyword id="KW-0479">Metal-binding</keyword>
<keyword id="KW-0597">Phosphoprotein</keyword>
<evidence type="ECO:0000255" key="1">
    <source>
        <dbReference type="HAMAP-Rule" id="MF_01554"/>
    </source>
</evidence>
<reference key="1">
    <citation type="journal article" date="2008" name="PLoS Genet.">
        <title>Complete genome sequence of the N2-fixing broad host range endophyte Klebsiella pneumoniae 342 and virulence predictions verified in mice.</title>
        <authorList>
            <person name="Fouts D.E."/>
            <person name="Tyler H.L."/>
            <person name="DeBoy R.T."/>
            <person name="Daugherty S."/>
            <person name="Ren Q."/>
            <person name="Badger J.H."/>
            <person name="Durkin A.S."/>
            <person name="Huot H."/>
            <person name="Shrivastava S."/>
            <person name="Kothari S."/>
            <person name="Dodson R.J."/>
            <person name="Mohamoud Y."/>
            <person name="Khouri H."/>
            <person name="Roesch L.F.W."/>
            <person name="Krogfelt K.A."/>
            <person name="Struve C."/>
            <person name="Triplett E.W."/>
            <person name="Methe B.A."/>
        </authorList>
    </citation>
    <scope>NUCLEOTIDE SEQUENCE [LARGE SCALE GENOMIC DNA]</scope>
    <source>
        <strain>342</strain>
    </source>
</reference>
<dbReference type="EC" id="5.4.2.10" evidence="1"/>
<dbReference type="EMBL" id="CP000964">
    <property type="protein sequence ID" value="ACI07953.1"/>
    <property type="molecule type" value="Genomic_DNA"/>
</dbReference>
<dbReference type="SMR" id="B5XSW5"/>
<dbReference type="KEGG" id="kpe:KPK_0535"/>
<dbReference type="HOGENOM" id="CLU_016950_7_0_6"/>
<dbReference type="Proteomes" id="UP000001734">
    <property type="component" value="Chromosome"/>
</dbReference>
<dbReference type="GO" id="GO:0005829">
    <property type="term" value="C:cytosol"/>
    <property type="evidence" value="ECO:0007669"/>
    <property type="project" value="TreeGrafter"/>
</dbReference>
<dbReference type="GO" id="GO:0000287">
    <property type="term" value="F:magnesium ion binding"/>
    <property type="evidence" value="ECO:0007669"/>
    <property type="project" value="UniProtKB-UniRule"/>
</dbReference>
<dbReference type="GO" id="GO:0008966">
    <property type="term" value="F:phosphoglucosamine mutase activity"/>
    <property type="evidence" value="ECO:0007669"/>
    <property type="project" value="UniProtKB-UniRule"/>
</dbReference>
<dbReference type="GO" id="GO:0004615">
    <property type="term" value="F:phosphomannomutase activity"/>
    <property type="evidence" value="ECO:0007669"/>
    <property type="project" value="TreeGrafter"/>
</dbReference>
<dbReference type="GO" id="GO:0005975">
    <property type="term" value="P:carbohydrate metabolic process"/>
    <property type="evidence" value="ECO:0007669"/>
    <property type="project" value="InterPro"/>
</dbReference>
<dbReference type="GO" id="GO:0009252">
    <property type="term" value="P:peptidoglycan biosynthetic process"/>
    <property type="evidence" value="ECO:0007669"/>
    <property type="project" value="TreeGrafter"/>
</dbReference>
<dbReference type="GO" id="GO:0006048">
    <property type="term" value="P:UDP-N-acetylglucosamine biosynthetic process"/>
    <property type="evidence" value="ECO:0007669"/>
    <property type="project" value="TreeGrafter"/>
</dbReference>
<dbReference type="CDD" id="cd05802">
    <property type="entry name" value="GlmM"/>
    <property type="match status" value="1"/>
</dbReference>
<dbReference type="FunFam" id="3.30.310.50:FF:000001">
    <property type="entry name" value="Phosphoglucosamine mutase"/>
    <property type="match status" value="1"/>
</dbReference>
<dbReference type="FunFam" id="3.40.120.10:FF:000001">
    <property type="entry name" value="Phosphoglucosamine mutase"/>
    <property type="match status" value="1"/>
</dbReference>
<dbReference type="FunFam" id="3.40.120.10:FF:000003">
    <property type="entry name" value="Phosphoglucosamine mutase"/>
    <property type="match status" value="1"/>
</dbReference>
<dbReference type="Gene3D" id="3.40.120.10">
    <property type="entry name" value="Alpha-D-Glucose-1,6-Bisphosphate, subunit A, domain 3"/>
    <property type="match status" value="3"/>
</dbReference>
<dbReference type="Gene3D" id="3.30.310.50">
    <property type="entry name" value="Alpha-D-phosphohexomutase, C-terminal domain"/>
    <property type="match status" value="1"/>
</dbReference>
<dbReference type="HAMAP" id="MF_01554_B">
    <property type="entry name" value="GlmM_B"/>
    <property type="match status" value="1"/>
</dbReference>
<dbReference type="InterPro" id="IPR005844">
    <property type="entry name" value="A-D-PHexomutase_a/b/a-I"/>
</dbReference>
<dbReference type="InterPro" id="IPR016055">
    <property type="entry name" value="A-D-PHexomutase_a/b/a-I/II/III"/>
</dbReference>
<dbReference type="InterPro" id="IPR005845">
    <property type="entry name" value="A-D-PHexomutase_a/b/a-II"/>
</dbReference>
<dbReference type="InterPro" id="IPR005846">
    <property type="entry name" value="A-D-PHexomutase_a/b/a-III"/>
</dbReference>
<dbReference type="InterPro" id="IPR005843">
    <property type="entry name" value="A-D-PHexomutase_C"/>
</dbReference>
<dbReference type="InterPro" id="IPR036900">
    <property type="entry name" value="A-D-PHexomutase_C_sf"/>
</dbReference>
<dbReference type="InterPro" id="IPR016066">
    <property type="entry name" value="A-D-PHexomutase_CS"/>
</dbReference>
<dbReference type="InterPro" id="IPR005841">
    <property type="entry name" value="Alpha-D-phosphohexomutase_SF"/>
</dbReference>
<dbReference type="InterPro" id="IPR006352">
    <property type="entry name" value="GlmM_bact"/>
</dbReference>
<dbReference type="InterPro" id="IPR050060">
    <property type="entry name" value="Phosphoglucosamine_mutase"/>
</dbReference>
<dbReference type="NCBIfam" id="TIGR01455">
    <property type="entry name" value="glmM"/>
    <property type="match status" value="1"/>
</dbReference>
<dbReference type="NCBIfam" id="NF008139">
    <property type="entry name" value="PRK10887.1"/>
    <property type="match status" value="1"/>
</dbReference>
<dbReference type="PANTHER" id="PTHR42946:SF1">
    <property type="entry name" value="PHOSPHOGLUCOMUTASE (ALPHA-D-GLUCOSE-1,6-BISPHOSPHATE-DEPENDENT)"/>
    <property type="match status" value="1"/>
</dbReference>
<dbReference type="PANTHER" id="PTHR42946">
    <property type="entry name" value="PHOSPHOHEXOSE MUTASE"/>
    <property type="match status" value="1"/>
</dbReference>
<dbReference type="Pfam" id="PF02878">
    <property type="entry name" value="PGM_PMM_I"/>
    <property type="match status" value="1"/>
</dbReference>
<dbReference type="Pfam" id="PF02879">
    <property type="entry name" value="PGM_PMM_II"/>
    <property type="match status" value="1"/>
</dbReference>
<dbReference type="Pfam" id="PF02880">
    <property type="entry name" value="PGM_PMM_III"/>
    <property type="match status" value="1"/>
</dbReference>
<dbReference type="Pfam" id="PF00408">
    <property type="entry name" value="PGM_PMM_IV"/>
    <property type="match status" value="1"/>
</dbReference>
<dbReference type="PRINTS" id="PR00509">
    <property type="entry name" value="PGMPMM"/>
</dbReference>
<dbReference type="SUPFAM" id="SSF55957">
    <property type="entry name" value="Phosphoglucomutase, C-terminal domain"/>
    <property type="match status" value="1"/>
</dbReference>
<dbReference type="SUPFAM" id="SSF53738">
    <property type="entry name" value="Phosphoglucomutase, first 3 domains"/>
    <property type="match status" value="3"/>
</dbReference>
<dbReference type="PROSITE" id="PS00710">
    <property type="entry name" value="PGM_PMM"/>
    <property type="match status" value="1"/>
</dbReference>
<proteinExistence type="inferred from homology"/>
<protein>
    <recommendedName>
        <fullName evidence="1">Phosphoglucosamine mutase</fullName>
        <ecNumber evidence="1">5.4.2.10</ecNumber>
    </recommendedName>
</protein>
<gene>
    <name evidence="1" type="primary">glmM</name>
    <name type="ordered locus">KPK_0535</name>
</gene>
<organism>
    <name type="scientific">Klebsiella pneumoniae (strain 342)</name>
    <dbReference type="NCBI Taxonomy" id="507522"/>
    <lineage>
        <taxon>Bacteria</taxon>
        <taxon>Pseudomonadati</taxon>
        <taxon>Pseudomonadota</taxon>
        <taxon>Gammaproteobacteria</taxon>
        <taxon>Enterobacterales</taxon>
        <taxon>Enterobacteriaceae</taxon>
        <taxon>Klebsiella/Raoultella group</taxon>
        <taxon>Klebsiella</taxon>
        <taxon>Klebsiella pneumoniae complex</taxon>
    </lineage>
</organism>
<feature type="chain" id="PRO_1000201110" description="Phosphoglucosamine mutase">
    <location>
        <begin position="1"/>
        <end position="445"/>
    </location>
</feature>
<feature type="active site" description="Phosphoserine intermediate" evidence="1">
    <location>
        <position position="102"/>
    </location>
</feature>
<feature type="binding site" description="via phosphate group" evidence="1">
    <location>
        <position position="102"/>
    </location>
    <ligand>
        <name>Mg(2+)</name>
        <dbReference type="ChEBI" id="CHEBI:18420"/>
    </ligand>
</feature>
<feature type="binding site" evidence="1">
    <location>
        <position position="241"/>
    </location>
    <ligand>
        <name>Mg(2+)</name>
        <dbReference type="ChEBI" id="CHEBI:18420"/>
    </ligand>
</feature>
<feature type="binding site" evidence="1">
    <location>
        <position position="243"/>
    </location>
    <ligand>
        <name>Mg(2+)</name>
        <dbReference type="ChEBI" id="CHEBI:18420"/>
    </ligand>
</feature>
<feature type="binding site" evidence="1">
    <location>
        <position position="245"/>
    </location>
    <ligand>
        <name>Mg(2+)</name>
        <dbReference type="ChEBI" id="CHEBI:18420"/>
    </ligand>
</feature>
<feature type="modified residue" description="Phosphoserine" evidence="1">
    <location>
        <position position="102"/>
    </location>
</feature>
<accession>B5XSW5</accession>